<comment type="subcellular location">
    <subcellularLocation>
        <location evidence="2">Cell membrane</location>
        <topology evidence="2">Multi-pass membrane protein</topology>
    </subcellularLocation>
</comment>
<sequence length="141" mass="14906">MSKKNSVAIMTTISAFLFCAVIVAASLSPLAGTGAAANQFNSAGMWSAVGMILVLYFIPFLVYMLGVDAMRYVMAVLCGFGLLIHLSSAGFILMFSFFSDHLLSEVIFVLGVSLAAAAVNVIWFVAAFRSGAEKTSVNTLT</sequence>
<protein>
    <recommendedName>
        <fullName>Uncharacterized protein YxaJ</fullName>
    </recommendedName>
</protein>
<gene>
    <name type="primary">yxaJ</name>
    <name type="ordered locus">BSU39950</name>
    <name type="ORF">S14J</name>
</gene>
<reference key="1">
    <citation type="journal article" date="1995" name="DNA Res.">
        <title>Cloning and sequencing of a 36-kb region of the Bacillus subtilis genome between the gnt and iol operons.</title>
        <authorList>
            <person name="Yoshida K."/>
            <person name="Seki S."/>
            <person name="Fujimura M."/>
            <person name="Miwa Y."/>
            <person name="Fujita Y."/>
        </authorList>
    </citation>
    <scope>NUCLEOTIDE SEQUENCE [GENOMIC DNA]</scope>
    <source>
        <strain>168 / BGSC1A1</strain>
    </source>
</reference>
<reference key="2">
    <citation type="journal article" date="1997" name="Nature">
        <title>The complete genome sequence of the Gram-positive bacterium Bacillus subtilis.</title>
        <authorList>
            <person name="Kunst F."/>
            <person name="Ogasawara N."/>
            <person name="Moszer I."/>
            <person name="Albertini A.M."/>
            <person name="Alloni G."/>
            <person name="Azevedo V."/>
            <person name="Bertero M.G."/>
            <person name="Bessieres P."/>
            <person name="Bolotin A."/>
            <person name="Borchert S."/>
            <person name="Borriss R."/>
            <person name="Boursier L."/>
            <person name="Brans A."/>
            <person name="Braun M."/>
            <person name="Brignell S.C."/>
            <person name="Bron S."/>
            <person name="Brouillet S."/>
            <person name="Bruschi C.V."/>
            <person name="Caldwell B."/>
            <person name="Capuano V."/>
            <person name="Carter N.M."/>
            <person name="Choi S.-K."/>
            <person name="Codani J.-J."/>
            <person name="Connerton I.F."/>
            <person name="Cummings N.J."/>
            <person name="Daniel R.A."/>
            <person name="Denizot F."/>
            <person name="Devine K.M."/>
            <person name="Duesterhoeft A."/>
            <person name="Ehrlich S.D."/>
            <person name="Emmerson P.T."/>
            <person name="Entian K.-D."/>
            <person name="Errington J."/>
            <person name="Fabret C."/>
            <person name="Ferrari E."/>
            <person name="Foulger D."/>
            <person name="Fritz C."/>
            <person name="Fujita M."/>
            <person name="Fujita Y."/>
            <person name="Fuma S."/>
            <person name="Galizzi A."/>
            <person name="Galleron N."/>
            <person name="Ghim S.-Y."/>
            <person name="Glaser P."/>
            <person name="Goffeau A."/>
            <person name="Golightly E.J."/>
            <person name="Grandi G."/>
            <person name="Guiseppi G."/>
            <person name="Guy B.J."/>
            <person name="Haga K."/>
            <person name="Haiech J."/>
            <person name="Harwood C.R."/>
            <person name="Henaut A."/>
            <person name="Hilbert H."/>
            <person name="Holsappel S."/>
            <person name="Hosono S."/>
            <person name="Hullo M.-F."/>
            <person name="Itaya M."/>
            <person name="Jones L.-M."/>
            <person name="Joris B."/>
            <person name="Karamata D."/>
            <person name="Kasahara Y."/>
            <person name="Klaerr-Blanchard M."/>
            <person name="Klein C."/>
            <person name="Kobayashi Y."/>
            <person name="Koetter P."/>
            <person name="Koningstein G."/>
            <person name="Krogh S."/>
            <person name="Kumano M."/>
            <person name="Kurita K."/>
            <person name="Lapidus A."/>
            <person name="Lardinois S."/>
            <person name="Lauber J."/>
            <person name="Lazarevic V."/>
            <person name="Lee S.-M."/>
            <person name="Levine A."/>
            <person name="Liu H."/>
            <person name="Masuda S."/>
            <person name="Mauel C."/>
            <person name="Medigue C."/>
            <person name="Medina N."/>
            <person name="Mellado R.P."/>
            <person name="Mizuno M."/>
            <person name="Moestl D."/>
            <person name="Nakai S."/>
            <person name="Noback M."/>
            <person name="Noone D."/>
            <person name="O'Reilly M."/>
            <person name="Ogawa K."/>
            <person name="Ogiwara A."/>
            <person name="Oudega B."/>
            <person name="Park S.-H."/>
            <person name="Parro V."/>
            <person name="Pohl T.M."/>
            <person name="Portetelle D."/>
            <person name="Porwollik S."/>
            <person name="Prescott A.M."/>
            <person name="Presecan E."/>
            <person name="Pujic P."/>
            <person name="Purnelle B."/>
            <person name="Rapoport G."/>
            <person name="Rey M."/>
            <person name="Reynolds S."/>
            <person name="Rieger M."/>
            <person name="Rivolta C."/>
            <person name="Rocha E."/>
            <person name="Roche B."/>
            <person name="Rose M."/>
            <person name="Sadaie Y."/>
            <person name="Sato T."/>
            <person name="Scanlan E."/>
            <person name="Schleich S."/>
            <person name="Schroeter R."/>
            <person name="Scoffone F."/>
            <person name="Sekiguchi J."/>
            <person name="Sekowska A."/>
            <person name="Seror S.J."/>
            <person name="Serror P."/>
            <person name="Shin B.-S."/>
            <person name="Soldo B."/>
            <person name="Sorokin A."/>
            <person name="Tacconi E."/>
            <person name="Takagi T."/>
            <person name="Takahashi H."/>
            <person name="Takemaru K."/>
            <person name="Takeuchi M."/>
            <person name="Tamakoshi A."/>
            <person name="Tanaka T."/>
            <person name="Terpstra P."/>
            <person name="Tognoni A."/>
            <person name="Tosato V."/>
            <person name="Uchiyama S."/>
            <person name="Vandenbol M."/>
            <person name="Vannier F."/>
            <person name="Vassarotti A."/>
            <person name="Viari A."/>
            <person name="Wambutt R."/>
            <person name="Wedler E."/>
            <person name="Wedler H."/>
            <person name="Weitzenegger T."/>
            <person name="Winters P."/>
            <person name="Wipat A."/>
            <person name="Yamamoto H."/>
            <person name="Yamane K."/>
            <person name="Yasumoto K."/>
            <person name="Yata K."/>
            <person name="Yoshida K."/>
            <person name="Yoshikawa H.-F."/>
            <person name="Zumstein E."/>
            <person name="Yoshikawa H."/>
            <person name="Danchin A."/>
        </authorList>
    </citation>
    <scope>NUCLEOTIDE SEQUENCE [LARGE SCALE GENOMIC DNA]</scope>
    <source>
        <strain>168</strain>
    </source>
</reference>
<reference key="3">
    <citation type="journal article" date="2009" name="Microbiology">
        <title>From a consortium sequence to a unified sequence: the Bacillus subtilis 168 reference genome a decade later.</title>
        <authorList>
            <person name="Barbe V."/>
            <person name="Cruveiller S."/>
            <person name="Kunst F."/>
            <person name="Lenoble P."/>
            <person name="Meurice G."/>
            <person name="Sekowska A."/>
            <person name="Vallenet D."/>
            <person name="Wang T."/>
            <person name="Moszer I."/>
            <person name="Medigue C."/>
            <person name="Danchin A."/>
        </authorList>
    </citation>
    <scope>SEQUENCE REVISION TO 15; 39 AND 105</scope>
</reference>
<evidence type="ECO:0000255" key="1"/>
<evidence type="ECO:0000305" key="2"/>
<feature type="chain" id="PRO_0000050001" description="Uncharacterized protein YxaJ">
    <location>
        <begin position="1"/>
        <end position="141"/>
    </location>
</feature>
<feature type="transmembrane region" description="Helical" evidence="1">
    <location>
        <begin position="7"/>
        <end position="27"/>
    </location>
</feature>
<feature type="transmembrane region" description="Helical" evidence="1">
    <location>
        <begin position="47"/>
        <end position="67"/>
    </location>
</feature>
<feature type="transmembrane region" description="Helical" evidence="1">
    <location>
        <begin position="75"/>
        <end position="95"/>
    </location>
</feature>
<feature type="transmembrane region" description="Helical" evidence="1">
    <location>
        <begin position="106"/>
        <end position="126"/>
    </location>
</feature>
<feature type="sequence conflict" description="In Ref. 1; BAA21589." evidence="2" ref="1">
    <original>A</original>
    <variation>P</variation>
    <location>
        <position position="15"/>
    </location>
</feature>
<feature type="sequence conflict" description="In Ref. 1; BAA21589." evidence="2" ref="1">
    <original>Q</original>
    <variation>PS</variation>
    <location>
        <position position="39"/>
    </location>
</feature>
<feature type="sequence conflict" description="In Ref. 1; BAA21589." evidence="2" ref="1">
    <original>E</original>
    <variation>K</variation>
    <location>
        <position position="105"/>
    </location>
</feature>
<keyword id="KW-1003">Cell membrane</keyword>
<keyword id="KW-0472">Membrane</keyword>
<keyword id="KW-1185">Reference proteome</keyword>
<keyword id="KW-0812">Transmembrane</keyword>
<keyword id="KW-1133">Transmembrane helix</keyword>
<dbReference type="EMBL" id="AB005554">
    <property type="protein sequence ID" value="BAA21589.1"/>
    <property type="molecule type" value="Genomic_DNA"/>
</dbReference>
<dbReference type="EMBL" id="AL009126">
    <property type="protein sequence ID" value="CAB16032.2"/>
    <property type="molecule type" value="Genomic_DNA"/>
</dbReference>
<dbReference type="PIR" id="A70072">
    <property type="entry name" value="A70072"/>
</dbReference>
<dbReference type="RefSeq" id="NP_391875.2">
    <property type="nucleotide sequence ID" value="NC_000964.3"/>
</dbReference>
<dbReference type="RefSeq" id="WP_003242533.1">
    <property type="nucleotide sequence ID" value="NZ_OZ025638.1"/>
</dbReference>
<dbReference type="SMR" id="P42109"/>
<dbReference type="FunCoup" id="P42109">
    <property type="interactions" value="59"/>
</dbReference>
<dbReference type="STRING" id="224308.BSU39950"/>
<dbReference type="PaxDb" id="224308-BSU39950"/>
<dbReference type="EnsemblBacteria" id="CAB16032">
    <property type="protein sequence ID" value="CAB16032"/>
    <property type="gene ID" value="BSU_39950"/>
</dbReference>
<dbReference type="GeneID" id="937687"/>
<dbReference type="KEGG" id="bsu:BSU39950"/>
<dbReference type="PATRIC" id="fig|224308.179.peg.4321"/>
<dbReference type="eggNOG" id="ENOG5034C2Q">
    <property type="taxonomic scope" value="Bacteria"/>
</dbReference>
<dbReference type="InParanoid" id="P42109"/>
<dbReference type="OrthoDB" id="2939127at2"/>
<dbReference type="BioCyc" id="BSUB:BSU39950-MONOMER"/>
<dbReference type="Proteomes" id="UP000001570">
    <property type="component" value="Chromosome"/>
</dbReference>
<dbReference type="GO" id="GO:0005886">
    <property type="term" value="C:plasma membrane"/>
    <property type="evidence" value="ECO:0007669"/>
    <property type="project" value="UniProtKB-SubCell"/>
</dbReference>
<dbReference type="InterPro" id="IPR020204">
    <property type="entry name" value="Uncharacterised_YxaJ"/>
</dbReference>
<dbReference type="Pfam" id="PF17369">
    <property type="entry name" value="DUF5391"/>
    <property type="match status" value="1"/>
</dbReference>
<name>YXAJ_BACSU</name>
<proteinExistence type="predicted"/>
<accession>P42109</accession>
<organism>
    <name type="scientific">Bacillus subtilis (strain 168)</name>
    <dbReference type="NCBI Taxonomy" id="224308"/>
    <lineage>
        <taxon>Bacteria</taxon>
        <taxon>Bacillati</taxon>
        <taxon>Bacillota</taxon>
        <taxon>Bacilli</taxon>
        <taxon>Bacillales</taxon>
        <taxon>Bacillaceae</taxon>
        <taxon>Bacillus</taxon>
    </lineage>
</organism>